<name>HIS1_MYCTU</name>
<protein>
    <recommendedName>
        <fullName evidence="1">ATP phosphoribosyltransferase</fullName>
        <shortName evidence="1">ATP-PRT</shortName>
        <shortName evidence="1 3">ATP-PRTase</shortName>
        <ecNumber evidence="1 4">2.4.2.17</ecNumber>
    </recommendedName>
</protein>
<proteinExistence type="evidence at protein level"/>
<evidence type="ECO:0000255" key="1">
    <source>
        <dbReference type="HAMAP-Rule" id="MF_00079"/>
    </source>
</evidence>
<evidence type="ECO:0000269" key="2">
    <source>
    </source>
</evidence>
<evidence type="ECO:0000303" key="3">
    <source>
    </source>
</evidence>
<evidence type="ECO:0000305" key="4">
    <source>
    </source>
</evidence>
<evidence type="ECO:0007744" key="5">
    <source>
        <dbReference type="PDB" id="1NH7"/>
    </source>
</evidence>
<evidence type="ECO:0007744" key="6">
    <source>
        <dbReference type="PDB" id="1NH8"/>
    </source>
</evidence>
<evidence type="ECO:0007829" key="7">
    <source>
        <dbReference type="PDB" id="1NH7"/>
    </source>
</evidence>
<evidence type="ECO:0007829" key="8">
    <source>
        <dbReference type="PDB" id="1NH8"/>
    </source>
</evidence>
<organism>
    <name type="scientific">Mycobacterium tuberculosis (strain ATCC 25618 / H37Rv)</name>
    <dbReference type="NCBI Taxonomy" id="83332"/>
    <lineage>
        <taxon>Bacteria</taxon>
        <taxon>Bacillati</taxon>
        <taxon>Actinomycetota</taxon>
        <taxon>Actinomycetes</taxon>
        <taxon>Mycobacteriales</taxon>
        <taxon>Mycobacteriaceae</taxon>
        <taxon>Mycobacterium</taxon>
        <taxon>Mycobacterium tuberculosis complex</taxon>
    </lineage>
</organism>
<comment type="function">
    <text evidence="1">Catalyzes the condensation of ATP and 5-phosphoribose 1-diphosphate to form N'-(5'-phosphoribosyl)-ATP (PR-ATP). Has a crucial role in the pathway because the rate of histidine biosynthesis seems to be controlled primarily by regulation of HisG enzymatic activity.</text>
</comment>
<comment type="catalytic activity">
    <reaction evidence="1 4">
        <text>1-(5-phospho-beta-D-ribosyl)-ATP + diphosphate = 5-phospho-alpha-D-ribose 1-diphosphate + ATP</text>
        <dbReference type="Rhea" id="RHEA:18473"/>
        <dbReference type="ChEBI" id="CHEBI:30616"/>
        <dbReference type="ChEBI" id="CHEBI:33019"/>
        <dbReference type="ChEBI" id="CHEBI:58017"/>
        <dbReference type="ChEBI" id="CHEBI:73183"/>
        <dbReference type="EC" id="2.4.2.17"/>
    </reaction>
</comment>
<comment type="cofactor">
    <cofactor evidence="1">
        <name>Mg(2+)</name>
        <dbReference type="ChEBI" id="CHEBI:18420"/>
    </cofactor>
</comment>
<comment type="activity regulation">
    <text evidence="2">Feedback inhibited by histidine. Also inhibited by AMP.</text>
</comment>
<comment type="pathway">
    <text evidence="1">Amino-acid biosynthesis; L-histidine biosynthesis; L-histidine from 5-phospho-alpha-D-ribose 1-diphosphate: step 1/9.</text>
</comment>
<comment type="subunit">
    <text evidence="1 2">Equilibrium between an active dimeric form, an inactive hexameric form and higher aggregates. Interconversion between the various forms is largely reversible and is influenced by the natural substrates and inhibitors of the enzyme.</text>
</comment>
<comment type="subcellular location">
    <subcellularLocation>
        <location evidence="1">Cytoplasm</location>
    </subcellularLocation>
</comment>
<comment type="similarity">
    <text evidence="1">Belongs to the ATP phosphoribosyltransferase family. Long subfamily.</text>
</comment>
<gene>
    <name evidence="3" type="primary">hisG</name>
    <name type="ordered locus">Rv2121c</name>
    <name type="ORF">MTCY261.17c</name>
</gene>
<dbReference type="EC" id="2.4.2.17" evidence="1 4"/>
<dbReference type="EMBL" id="AL123456">
    <property type="protein sequence ID" value="CCP44896.1"/>
    <property type="molecule type" value="Genomic_DNA"/>
</dbReference>
<dbReference type="PIR" id="D70513">
    <property type="entry name" value="D70513"/>
</dbReference>
<dbReference type="RefSeq" id="NP_216637.1">
    <property type="nucleotide sequence ID" value="NC_000962.3"/>
</dbReference>
<dbReference type="RefSeq" id="WP_003411047.1">
    <property type="nucleotide sequence ID" value="NZ_NVQJ01000058.1"/>
</dbReference>
<dbReference type="PDB" id="1NH7">
    <property type="method" value="X-ray"/>
    <property type="resolution" value="2.70 A"/>
    <property type="chains" value="A=1-284"/>
</dbReference>
<dbReference type="PDB" id="1NH8">
    <property type="method" value="X-ray"/>
    <property type="resolution" value="1.80 A"/>
    <property type="chains" value="A=1-284"/>
</dbReference>
<dbReference type="PDB" id="5LHT">
    <property type="method" value="X-ray"/>
    <property type="resolution" value="2.06 A"/>
    <property type="chains" value="A=1-284"/>
</dbReference>
<dbReference type="PDB" id="5LHU">
    <property type="method" value="X-ray"/>
    <property type="resolution" value="2.02 A"/>
    <property type="chains" value="A=1-284"/>
</dbReference>
<dbReference type="PDB" id="5U99">
    <property type="method" value="X-ray"/>
    <property type="resolution" value="2.40 A"/>
    <property type="chains" value="A=1-284"/>
</dbReference>
<dbReference type="PDBsum" id="1NH7"/>
<dbReference type="PDBsum" id="1NH8"/>
<dbReference type="PDBsum" id="5LHT"/>
<dbReference type="PDBsum" id="5LHU"/>
<dbReference type="PDBsum" id="5U99"/>
<dbReference type="SMR" id="P9WMN1"/>
<dbReference type="FunCoup" id="P9WMN1">
    <property type="interactions" value="374"/>
</dbReference>
<dbReference type="STRING" id="83332.Rv2121c"/>
<dbReference type="BindingDB" id="P9WMN1"/>
<dbReference type="ChEMBL" id="CHEMBL6086"/>
<dbReference type="DrugCentral" id="P9WMN1"/>
<dbReference type="PaxDb" id="83332-Rv2121c"/>
<dbReference type="DNASU" id="888689"/>
<dbReference type="GeneID" id="45426096"/>
<dbReference type="GeneID" id="888689"/>
<dbReference type="KEGG" id="mtu:Rv2121c"/>
<dbReference type="KEGG" id="mtv:RVBD_2121c"/>
<dbReference type="TubercuList" id="Rv2121c"/>
<dbReference type="eggNOG" id="COG0040">
    <property type="taxonomic scope" value="Bacteria"/>
</dbReference>
<dbReference type="InParanoid" id="P9WMN1"/>
<dbReference type="OrthoDB" id="9801867at2"/>
<dbReference type="PhylomeDB" id="P9WMN1"/>
<dbReference type="BRENDA" id="2.4.2.17">
    <property type="organism ID" value="3445"/>
</dbReference>
<dbReference type="UniPathway" id="UPA00031">
    <property type="reaction ID" value="UER00006"/>
</dbReference>
<dbReference type="EvolutionaryTrace" id="P9WMN1"/>
<dbReference type="Proteomes" id="UP000001584">
    <property type="component" value="Chromosome"/>
</dbReference>
<dbReference type="GO" id="GO:0005737">
    <property type="term" value="C:cytoplasm"/>
    <property type="evidence" value="ECO:0007669"/>
    <property type="project" value="UniProtKB-SubCell"/>
</dbReference>
<dbReference type="GO" id="GO:0005886">
    <property type="term" value="C:plasma membrane"/>
    <property type="evidence" value="ECO:0007005"/>
    <property type="project" value="MTBBASE"/>
</dbReference>
<dbReference type="GO" id="GO:0016208">
    <property type="term" value="F:AMP binding"/>
    <property type="evidence" value="ECO:0000314"/>
    <property type="project" value="MTBBASE"/>
</dbReference>
<dbReference type="GO" id="GO:0005524">
    <property type="term" value="F:ATP binding"/>
    <property type="evidence" value="ECO:0000314"/>
    <property type="project" value="MTBBASE"/>
</dbReference>
<dbReference type="GO" id="GO:0003879">
    <property type="term" value="F:ATP phosphoribosyltransferase activity"/>
    <property type="evidence" value="ECO:0000314"/>
    <property type="project" value="MTBBASE"/>
</dbReference>
<dbReference type="GO" id="GO:0000287">
    <property type="term" value="F:magnesium ion binding"/>
    <property type="evidence" value="ECO:0000314"/>
    <property type="project" value="MTBBASE"/>
</dbReference>
<dbReference type="GO" id="GO:0000105">
    <property type="term" value="P:L-histidine biosynthetic process"/>
    <property type="evidence" value="ECO:0000314"/>
    <property type="project" value="MTBBASE"/>
</dbReference>
<dbReference type="CDD" id="cd13591">
    <property type="entry name" value="PBP2_HisGL1"/>
    <property type="match status" value="1"/>
</dbReference>
<dbReference type="FunFam" id="3.30.70.120:FF:000003">
    <property type="entry name" value="ATP phosphoribosyltransferase"/>
    <property type="match status" value="1"/>
</dbReference>
<dbReference type="FunFam" id="3.40.190.10:FF:000115">
    <property type="entry name" value="ATP phosphoribosyltransferase"/>
    <property type="match status" value="1"/>
</dbReference>
<dbReference type="Gene3D" id="3.30.70.120">
    <property type="match status" value="1"/>
</dbReference>
<dbReference type="Gene3D" id="3.40.190.10">
    <property type="entry name" value="Periplasmic binding protein-like II"/>
    <property type="match status" value="2"/>
</dbReference>
<dbReference type="HAMAP" id="MF_00079">
    <property type="entry name" value="HisG_Long"/>
    <property type="match status" value="1"/>
</dbReference>
<dbReference type="InterPro" id="IPR020621">
    <property type="entry name" value="ATP-PRT_HisG_long"/>
</dbReference>
<dbReference type="InterPro" id="IPR013820">
    <property type="entry name" value="ATP_PRibTrfase_cat"/>
</dbReference>
<dbReference type="InterPro" id="IPR018198">
    <property type="entry name" value="ATP_PRibTrfase_CS"/>
</dbReference>
<dbReference type="InterPro" id="IPR001348">
    <property type="entry name" value="ATP_PRibTrfase_HisG"/>
</dbReference>
<dbReference type="InterPro" id="IPR013115">
    <property type="entry name" value="HisG_C"/>
</dbReference>
<dbReference type="InterPro" id="IPR011322">
    <property type="entry name" value="N-reg_PII-like_a/b"/>
</dbReference>
<dbReference type="InterPro" id="IPR015867">
    <property type="entry name" value="N-reg_PII/ATP_PRibTrfase_C"/>
</dbReference>
<dbReference type="NCBIfam" id="TIGR00070">
    <property type="entry name" value="hisG"/>
    <property type="match status" value="1"/>
</dbReference>
<dbReference type="NCBIfam" id="TIGR03455">
    <property type="entry name" value="HisG_C-term"/>
    <property type="match status" value="1"/>
</dbReference>
<dbReference type="PANTHER" id="PTHR21403:SF8">
    <property type="entry name" value="ATP PHOSPHORIBOSYLTRANSFERASE"/>
    <property type="match status" value="1"/>
</dbReference>
<dbReference type="PANTHER" id="PTHR21403">
    <property type="entry name" value="ATP PHOSPHORIBOSYLTRANSFERASE ATP-PRTASE"/>
    <property type="match status" value="1"/>
</dbReference>
<dbReference type="Pfam" id="PF01634">
    <property type="entry name" value="HisG"/>
    <property type="match status" value="1"/>
</dbReference>
<dbReference type="Pfam" id="PF08029">
    <property type="entry name" value="HisG_C"/>
    <property type="match status" value="1"/>
</dbReference>
<dbReference type="SUPFAM" id="SSF54913">
    <property type="entry name" value="GlnB-like"/>
    <property type="match status" value="1"/>
</dbReference>
<dbReference type="SUPFAM" id="SSF53850">
    <property type="entry name" value="Periplasmic binding protein-like II"/>
    <property type="match status" value="1"/>
</dbReference>
<dbReference type="PROSITE" id="PS01316">
    <property type="entry name" value="ATP_P_PHORIBOSYLTR"/>
    <property type="match status" value="1"/>
</dbReference>
<feature type="chain" id="PRO_0000151857" description="ATP phosphoribosyltransferase">
    <location>
        <begin position="1"/>
        <end position="284"/>
    </location>
</feature>
<feature type="strand" evidence="8">
    <location>
        <begin position="2"/>
        <end position="10"/>
    </location>
</feature>
<feature type="helix" evidence="8">
    <location>
        <begin position="13"/>
        <end position="22"/>
    </location>
</feature>
<feature type="strand" evidence="8">
    <location>
        <begin position="34"/>
        <end position="38"/>
    </location>
</feature>
<feature type="turn" evidence="8">
    <location>
        <begin position="39"/>
        <end position="42"/>
    </location>
</feature>
<feature type="strand" evidence="8">
    <location>
        <begin position="43"/>
        <end position="48"/>
    </location>
</feature>
<feature type="helix" evidence="8">
    <location>
        <begin position="50"/>
        <end position="52"/>
    </location>
</feature>
<feature type="helix" evidence="8">
    <location>
        <begin position="53"/>
        <end position="59"/>
    </location>
</feature>
<feature type="strand" evidence="8">
    <location>
        <begin position="63"/>
        <end position="68"/>
    </location>
</feature>
<feature type="helix" evidence="8">
    <location>
        <begin position="69"/>
        <end position="75"/>
    </location>
</feature>
<feature type="strand" evidence="8">
    <location>
        <begin position="79"/>
        <end position="84"/>
    </location>
</feature>
<feature type="strand" evidence="7">
    <location>
        <begin position="86"/>
        <end position="88"/>
    </location>
</feature>
<feature type="strand" evidence="8">
    <location>
        <begin position="90"/>
        <end position="97"/>
    </location>
</feature>
<feature type="helix" evidence="8">
    <location>
        <begin position="104"/>
        <end position="107"/>
    </location>
</feature>
<feature type="strand" evidence="8">
    <location>
        <begin position="111"/>
        <end position="115"/>
    </location>
</feature>
<feature type="helix" evidence="8">
    <location>
        <begin position="117"/>
        <end position="127"/>
    </location>
</feature>
<feature type="strand" evidence="8">
    <location>
        <begin position="132"/>
        <end position="135"/>
    </location>
</feature>
<feature type="helix" evidence="8">
    <location>
        <begin position="142"/>
        <end position="145"/>
    </location>
</feature>
<feature type="strand" evidence="8">
    <location>
        <begin position="150"/>
        <end position="159"/>
    </location>
</feature>
<feature type="helix" evidence="8">
    <location>
        <begin position="160"/>
        <end position="164"/>
    </location>
</feature>
<feature type="strand" evidence="8">
    <location>
        <begin position="167"/>
        <end position="177"/>
    </location>
</feature>
<feature type="strand" evidence="8">
    <location>
        <begin position="179"/>
        <end position="184"/>
    </location>
</feature>
<feature type="helix" evidence="8">
    <location>
        <begin position="195"/>
        <end position="209"/>
    </location>
</feature>
<feature type="strand" evidence="8">
    <location>
        <begin position="212"/>
        <end position="220"/>
    </location>
</feature>
<feature type="helix" evidence="8">
    <location>
        <begin position="221"/>
        <end position="223"/>
    </location>
</feature>
<feature type="helix" evidence="8">
    <location>
        <begin position="224"/>
        <end position="230"/>
    </location>
</feature>
<feature type="strand" evidence="8">
    <location>
        <begin position="234"/>
        <end position="236"/>
    </location>
</feature>
<feature type="strand" evidence="8">
    <location>
        <begin position="238"/>
        <end position="241"/>
    </location>
</feature>
<feature type="strand" evidence="8">
    <location>
        <begin position="247"/>
        <end position="255"/>
    </location>
</feature>
<feature type="helix" evidence="8">
    <location>
        <begin position="256"/>
        <end position="258"/>
    </location>
</feature>
<feature type="helix" evidence="8">
    <location>
        <begin position="259"/>
        <end position="268"/>
    </location>
</feature>
<feature type="strand" evidence="8">
    <location>
        <begin position="272"/>
        <end position="277"/>
    </location>
</feature>
<accession>P9WMN1</accession>
<accession>L0TBL0</accession>
<accession>O33256</accession>
<accession>P60759</accession>
<sequence>MLRVAVPNKGALSEPATEILAEAGYRRRTDSKDLTVIDPVNNVEFFFLRPKDIAIYVGSGELDFGITGRDLVCDSGAQVRERLALGFGSSSFRYAAPAGRNWTTADLAGMRIATAYPNLVRKDLATKGIEATVIRLDGAVEISVQLGVADAIADVVGSGRTLSQHDLVAFGEPLCDSEAVLIERAGTDGQDQTEARDQLVARVQGVVFGQQYLMLDYDCPRSALKKATAITPGLESPTIAPLADPDWVAIRALVPRRDVNGIMDELAAIGAKAILASDIRFCRF</sequence>
<keyword id="KW-0002">3D-structure</keyword>
<keyword id="KW-0028">Amino-acid biosynthesis</keyword>
<keyword id="KW-0067">ATP-binding</keyword>
<keyword id="KW-0963">Cytoplasm</keyword>
<keyword id="KW-0328">Glycosyltransferase</keyword>
<keyword id="KW-0368">Histidine biosynthesis</keyword>
<keyword id="KW-0460">Magnesium</keyword>
<keyword id="KW-0479">Metal-binding</keyword>
<keyword id="KW-0547">Nucleotide-binding</keyword>
<keyword id="KW-1185">Reference proteome</keyword>
<keyword id="KW-0808">Transferase</keyword>
<reference key="1">
    <citation type="journal article" date="1998" name="Nature">
        <title>Deciphering the biology of Mycobacterium tuberculosis from the complete genome sequence.</title>
        <authorList>
            <person name="Cole S.T."/>
            <person name="Brosch R."/>
            <person name="Parkhill J."/>
            <person name="Garnier T."/>
            <person name="Churcher C.M."/>
            <person name="Harris D.E."/>
            <person name="Gordon S.V."/>
            <person name="Eiglmeier K."/>
            <person name="Gas S."/>
            <person name="Barry C.E. III"/>
            <person name="Tekaia F."/>
            <person name="Badcock K."/>
            <person name="Basham D."/>
            <person name="Brown D."/>
            <person name="Chillingworth T."/>
            <person name="Connor R."/>
            <person name="Davies R.M."/>
            <person name="Devlin K."/>
            <person name="Feltwell T."/>
            <person name="Gentles S."/>
            <person name="Hamlin N."/>
            <person name="Holroyd S."/>
            <person name="Hornsby T."/>
            <person name="Jagels K."/>
            <person name="Krogh A."/>
            <person name="McLean J."/>
            <person name="Moule S."/>
            <person name="Murphy L.D."/>
            <person name="Oliver S."/>
            <person name="Osborne J."/>
            <person name="Quail M.A."/>
            <person name="Rajandream M.A."/>
            <person name="Rogers J."/>
            <person name="Rutter S."/>
            <person name="Seeger K."/>
            <person name="Skelton S."/>
            <person name="Squares S."/>
            <person name="Squares R."/>
            <person name="Sulston J.E."/>
            <person name="Taylor K."/>
            <person name="Whitehead S."/>
            <person name="Barrell B.G."/>
        </authorList>
    </citation>
    <scope>NUCLEOTIDE SEQUENCE [LARGE SCALE GENOMIC DNA]</scope>
    <source>
        <strain>ATCC 25618 / H37Rv</strain>
    </source>
</reference>
<reference key="2">
    <citation type="journal article" date="2011" name="Mol. Cell. Proteomics">
        <title>Proteogenomic analysis of Mycobacterium tuberculosis by high resolution mass spectrometry.</title>
        <authorList>
            <person name="Kelkar D.S."/>
            <person name="Kumar D."/>
            <person name="Kumar P."/>
            <person name="Balakrishnan L."/>
            <person name="Muthusamy B."/>
            <person name="Yadav A.K."/>
            <person name="Shrivastava P."/>
            <person name="Marimuthu A."/>
            <person name="Anand S."/>
            <person name="Sundaram H."/>
            <person name="Kingsbury R."/>
            <person name="Harsha H.C."/>
            <person name="Nair B."/>
            <person name="Prasad T.S."/>
            <person name="Chauhan D.S."/>
            <person name="Katoch K."/>
            <person name="Katoch V.M."/>
            <person name="Kumar P."/>
            <person name="Chaerkady R."/>
            <person name="Ramachandran S."/>
            <person name="Dash D."/>
            <person name="Pandey A."/>
        </authorList>
    </citation>
    <scope>IDENTIFICATION BY MASS SPECTROMETRY [LARGE SCALE ANALYSIS]</scope>
    <source>
        <strain>ATCC 25618 / H37Rv</strain>
    </source>
</reference>
<reference evidence="5 6" key="3">
    <citation type="journal article" date="2003" name="J. Biol. Chem.">
        <title>Crystal structure of ATP phosphoribosyltransferase from Mycobacterium tuberculosis.</title>
        <authorList>
            <person name="Cho Y."/>
            <person name="Sharma V."/>
            <person name="Sacchettini J.C."/>
        </authorList>
    </citation>
    <scope>X-RAY CRYSTALLOGRAPHY (1.8 ANGSTROMS) OF NATIVE PROTEIN AND IN COMPLEX WITH HISTIDINE AND AMP</scope>
    <scope>ACTIVITY REGULATION</scope>
    <scope>SUBUNIT</scope>
    <source>
        <strain>ATCC 25618 / H37Rv</strain>
    </source>
</reference>